<protein>
    <recommendedName>
        <fullName>Zinc finger protein 652-A</fullName>
    </recommendedName>
</protein>
<organism>
    <name type="scientific">Xenopus laevis</name>
    <name type="common">African clawed frog</name>
    <dbReference type="NCBI Taxonomy" id="8355"/>
    <lineage>
        <taxon>Eukaryota</taxon>
        <taxon>Metazoa</taxon>
        <taxon>Chordata</taxon>
        <taxon>Craniata</taxon>
        <taxon>Vertebrata</taxon>
        <taxon>Euteleostomi</taxon>
        <taxon>Amphibia</taxon>
        <taxon>Batrachia</taxon>
        <taxon>Anura</taxon>
        <taxon>Pipoidea</taxon>
        <taxon>Pipidae</taxon>
        <taxon>Xenopodinae</taxon>
        <taxon>Xenopus</taxon>
        <taxon>Xenopus</taxon>
    </lineage>
</organism>
<keyword id="KW-0238">DNA-binding</keyword>
<keyword id="KW-0479">Metal-binding</keyword>
<keyword id="KW-0539">Nucleus</keyword>
<keyword id="KW-1185">Reference proteome</keyword>
<keyword id="KW-0677">Repeat</keyword>
<keyword id="KW-0804">Transcription</keyword>
<keyword id="KW-0805">Transcription regulation</keyword>
<keyword id="KW-0862">Zinc</keyword>
<keyword id="KW-0863">Zinc-finger</keyword>
<sequence length="625" mass="71186">MGQTANSCQKMLDGRPADVSGMVVNDPCLMNIPTSFYHSTNQELDLSNKTFKREVGGPFSVMMENKMGKPHLLETDQQNFFRDSKPINEVHSVKGERENSGESEEEEDDDDDDDDEDDEEGEEDEDEVNYKREQIIVEVNLNNQTLNVSKGDKGVAQDSSHIKTSSDDEEGDSGEDDQDSHEDEENNPLPLDGQTNMQHGNQDQKTENSDMVGGDGTIPANSTKELGKGGEAPKRKKKTPKEPKSPSDKAKSEEKETLTCDKCPRVFNTRWYLEKHMNVTHRRMQICDKCGKKFVLESELSLHLQTDCEKNIQCITCNKTFKKLWSLHEHIKIVHGYAEKKFSCEICEKKFYTMAHVRKHLVAHTKDMPFTCETCGKSFKRSMSLKVHSLQHSGEKPFRCENCDERFQYKYQLRSHMSIHIGHKQFMCQWCGKDFNMKQYFDEHMKTHTGEKPFICEICGKSFTSRPNMKRHRRTHTGEKPYPCDVCGMRFRFSNMLKAHKEKCFRVTSPVGVPPALQIALGNPTLSNPSQGVTHLPTAHVPPPSPTPPLNLNVLNTLPPRPIPHPFSHLHLHPHSHTHHLAVPPVPHLPPPPALFKSEALNHRGHNDDSFLRHLAEKTSASQHH</sequence>
<accession>Q6GNP2</accession>
<reference key="1">
    <citation type="submission" date="2004-06" db="EMBL/GenBank/DDBJ databases">
        <authorList>
            <consortium name="NIH - Xenopus Gene Collection (XGC) project"/>
        </authorList>
    </citation>
    <scope>NUCLEOTIDE SEQUENCE [LARGE SCALE MRNA]</scope>
    <source>
        <tissue>Embryo</tissue>
    </source>
</reference>
<evidence type="ECO:0000255" key="1">
    <source>
        <dbReference type="PROSITE-ProRule" id="PRU00042"/>
    </source>
</evidence>
<evidence type="ECO:0000256" key="2">
    <source>
        <dbReference type="SAM" id="MobiDB-lite"/>
    </source>
</evidence>
<evidence type="ECO:0000305" key="3"/>
<dbReference type="EMBL" id="BC073462">
    <property type="protein sequence ID" value="AAH73462.1"/>
    <property type="molecule type" value="mRNA"/>
</dbReference>
<dbReference type="RefSeq" id="NP_001085876.1">
    <property type="nucleotide sequence ID" value="NM_001092407.1"/>
</dbReference>
<dbReference type="SMR" id="Q6GNP2"/>
<dbReference type="DNASU" id="444303"/>
<dbReference type="GeneID" id="444303"/>
<dbReference type="KEGG" id="xla:444303"/>
<dbReference type="AGR" id="Xenbase:XB-GENE-6465969"/>
<dbReference type="CTD" id="444303"/>
<dbReference type="Xenbase" id="XB-GENE-6465969">
    <property type="gene designation" value="znf652.L"/>
</dbReference>
<dbReference type="OrthoDB" id="427030at2759"/>
<dbReference type="Proteomes" id="UP000186698">
    <property type="component" value="Chromosome 9_10L"/>
</dbReference>
<dbReference type="Bgee" id="444303">
    <property type="expression patterns" value="Expressed in neurula embryo and 19 other cell types or tissues"/>
</dbReference>
<dbReference type="GO" id="GO:0005634">
    <property type="term" value="C:nucleus"/>
    <property type="evidence" value="ECO:0007669"/>
    <property type="project" value="UniProtKB-SubCell"/>
</dbReference>
<dbReference type="GO" id="GO:0001228">
    <property type="term" value="F:DNA-binding transcription activator activity, RNA polymerase II-specific"/>
    <property type="evidence" value="ECO:0007669"/>
    <property type="project" value="TreeGrafter"/>
</dbReference>
<dbReference type="GO" id="GO:0000981">
    <property type="term" value="F:DNA-binding transcription factor activity, RNA polymerase II-specific"/>
    <property type="evidence" value="ECO:0000318"/>
    <property type="project" value="GO_Central"/>
</dbReference>
<dbReference type="GO" id="GO:0000978">
    <property type="term" value="F:RNA polymerase II cis-regulatory region sequence-specific DNA binding"/>
    <property type="evidence" value="ECO:0000318"/>
    <property type="project" value="GO_Central"/>
</dbReference>
<dbReference type="GO" id="GO:0008270">
    <property type="term" value="F:zinc ion binding"/>
    <property type="evidence" value="ECO:0007669"/>
    <property type="project" value="UniProtKB-KW"/>
</dbReference>
<dbReference type="GO" id="GO:0006357">
    <property type="term" value="P:regulation of transcription by RNA polymerase II"/>
    <property type="evidence" value="ECO:0000318"/>
    <property type="project" value="GO_Central"/>
</dbReference>
<dbReference type="FunFam" id="3.30.160.60:FF:000900">
    <property type="entry name" value="Zinc finger and BTB domain containing 47"/>
    <property type="match status" value="1"/>
</dbReference>
<dbReference type="FunFam" id="3.30.160.60:FF:000312">
    <property type="entry name" value="Zinc finger and BTB domain-containing 47"/>
    <property type="match status" value="1"/>
</dbReference>
<dbReference type="FunFam" id="3.30.160.60:FF:000550">
    <property type="entry name" value="Zinc finger and BTB domain-containing 47"/>
    <property type="match status" value="1"/>
</dbReference>
<dbReference type="FunFam" id="3.30.160.60:FF:000166">
    <property type="entry name" value="Zinc finger and BTB domain-containing 49"/>
    <property type="match status" value="1"/>
</dbReference>
<dbReference type="FunFam" id="3.30.160.60:FF:001300">
    <property type="entry name" value="Zinc finger and BTB domain-containing protein 47"/>
    <property type="match status" value="1"/>
</dbReference>
<dbReference type="FunFam" id="3.30.160.60:FF:001378">
    <property type="entry name" value="Zinc finger protein 652"/>
    <property type="match status" value="1"/>
</dbReference>
<dbReference type="FunFam" id="3.30.160.60:FF:000284">
    <property type="entry name" value="Zinc finger protein 652 isoform X1"/>
    <property type="match status" value="1"/>
</dbReference>
<dbReference type="Gene3D" id="3.30.160.60">
    <property type="entry name" value="Classic Zinc Finger"/>
    <property type="match status" value="7"/>
</dbReference>
<dbReference type="InterPro" id="IPR036236">
    <property type="entry name" value="Znf_C2H2_sf"/>
</dbReference>
<dbReference type="InterPro" id="IPR013087">
    <property type="entry name" value="Znf_C2H2_type"/>
</dbReference>
<dbReference type="PANTHER" id="PTHR24393:SF15">
    <property type="entry name" value="IP01243P-RELATED"/>
    <property type="match status" value="1"/>
</dbReference>
<dbReference type="PANTHER" id="PTHR24393">
    <property type="entry name" value="ZINC FINGER PROTEIN"/>
    <property type="match status" value="1"/>
</dbReference>
<dbReference type="Pfam" id="PF00096">
    <property type="entry name" value="zf-C2H2"/>
    <property type="match status" value="5"/>
</dbReference>
<dbReference type="SMART" id="SM00355">
    <property type="entry name" value="ZnF_C2H2"/>
    <property type="match status" value="9"/>
</dbReference>
<dbReference type="SUPFAM" id="SSF57667">
    <property type="entry name" value="beta-beta-alpha zinc fingers"/>
    <property type="match status" value="5"/>
</dbReference>
<dbReference type="PROSITE" id="PS00028">
    <property type="entry name" value="ZINC_FINGER_C2H2_1"/>
    <property type="match status" value="7"/>
</dbReference>
<dbReference type="PROSITE" id="PS50157">
    <property type="entry name" value="ZINC_FINGER_C2H2_2"/>
    <property type="match status" value="8"/>
</dbReference>
<feature type="chain" id="PRO_0000280431" description="Zinc finger protein 652-A">
    <location>
        <begin position="1"/>
        <end position="625"/>
    </location>
</feature>
<feature type="zinc finger region" description="C2H2-type 1" evidence="1">
    <location>
        <begin position="258"/>
        <end position="281"/>
    </location>
</feature>
<feature type="zinc finger region" description="C2H2-type 2; degenerate" evidence="1">
    <location>
        <begin position="285"/>
        <end position="307"/>
    </location>
</feature>
<feature type="zinc finger region" description="C2H2-type 3" evidence="1">
    <location>
        <begin position="312"/>
        <end position="335"/>
    </location>
</feature>
<feature type="zinc finger region" description="C2H2-type 4" evidence="1">
    <location>
        <begin position="342"/>
        <end position="364"/>
    </location>
</feature>
<feature type="zinc finger region" description="C2H2-type 5" evidence="1">
    <location>
        <begin position="370"/>
        <end position="392"/>
    </location>
</feature>
<feature type="zinc finger region" description="C2H2-type 6" evidence="1">
    <location>
        <begin position="398"/>
        <end position="420"/>
    </location>
</feature>
<feature type="zinc finger region" description="C2H2-type 7" evidence="1">
    <location>
        <begin position="426"/>
        <end position="448"/>
    </location>
</feature>
<feature type="zinc finger region" description="C2H2-type 8" evidence="1">
    <location>
        <begin position="454"/>
        <end position="476"/>
    </location>
</feature>
<feature type="zinc finger region" description="C2H2-type 9; degenerate" evidence="1">
    <location>
        <begin position="482"/>
        <end position="505"/>
    </location>
</feature>
<feature type="region of interest" description="Disordered" evidence="2">
    <location>
        <begin position="80"/>
        <end position="255"/>
    </location>
</feature>
<feature type="compositionally biased region" description="Basic and acidic residues" evidence="2">
    <location>
        <begin position="82"/>
        <end position="100"/>
    </location>
</feature>
<feature type="compositionally biased region" description="Acidic residues" evidence="2">
    <location>
        <begin position="101"/>
        <end position="127"/>
    </location>
</feature>
<feature type="compositionally biased region" description="Basic and acidic residues" evidence="2">
    <location>
        <begin position="150"/>
        <end position="166"/>
    </location>
</feature>
<feature type="compositionally biased region" description="Acidic residues" evidence="2">
    <location>
        <begin position="167"/>
        <end position="186"/>
    </location>
</feature>
<feature type="compositionally biased region" description="Basic and acidic residues" evidence="2">
    <location>
        <begin position="240"/>
        <end position="255"/>
    </location>
</feature>
<gene>
    <name type="primary">znf652-a</name>
</gene>
<name>Z652A_XENLA</name>
<comment type="function">
    <text>May be involved in transcriptional regulation.</text>
</comment>
<comment type="subcellular location">
    <subcellularLocation>
        <location evidence="3">Nucleus</location>
    </subcellularLocation>
</comment>
<comment type="similarity">
    <text evidence="3">Belongs to the krueppel C2H2-type zinc-finger protein family.</text>
</comment>
<proteinExistence type="evidence at transcript level"/>